<sequence length="230" mass="26090">MEGQRWLPLEANPEVTNQFLKQLGLHPNWQFVDVYGMDPELLSMVPRPVCAVLLLFPITEKYEVFRTEEEEKIKSQGQDVTPSVYFMKQTISNACGTIGLIHAIANNKNKMHFESGSTLKKFLEESASMSPDERARYLESYDAIPVTHETSAHEGQTEAPNIDEKVDLHFIALVHVDGHLYELDGRKPFPINHGETSDETLLEDAIEVCKKFMERDPDELRFNAIALSAA</sequence>
<proteinExistence type="evidence at transcript level"/>
<reference key="1">
    <citation type="submission" date="2006-08" db="EMBL/GenBank/DDBJ databases">
        <authorList>
            <person name="Liu G.Y."/>
        </authorList>
    </citation>
    <scope>NUCLEOTIDE SEQUENCE [LARGE SCALE MRNA]</scope>
</reference>
<evidence type="ECO:0000250" key="1"/>
<evidence type="ECO:0000250" key="2">
    <source>
        <dbReference type="UniProtKB" id="P15374"/>
    </source>
</evidence>
<evidence type="ECO:0000255" key="3">
    <source>
        <dbReference type="PROSITE-ProRule" id="PRU01393"/>
    </source>
</evidence>
<evidence type="ECO:0000255" key="4">
    <source>
        <dbReference type="PROSITE-ProRule" id="PRU10091"/>
    </source>
</evidence>
<evidence type="ECO:0000305" key="5"/>
<feature type="chain" id="PRO_0000289800" description="Ubiquitin carboxyl-terminal hydrolase isozyme L3">
    <location>
        <begin position="1"/>
        <end position="230"/>
    </location>
</feature>
<feature type="domain" description="UCH catalytic" evidence="3">
    <location>
        <begin position="5"/>
        <end position="229"/>
    </location>
</feature>
<feature type="region of interest" description="Interaction with ubiquitin" evidence="2">
    <location>
        <begin position="8"/>
        <end position="13"/>
    </location>
</feature>
<feature type="region of interest" description="Interaction with ubiquitin. Crossover loop which restricts access of large ubiquitin adducts to the active site" evidence="2">
    <location>
        <begin position="152"/>
        <end position="159"/>
    </location>
</feature>
<feature type="region of interest" description="Interaction with ubiquitin" evidence="2">
    <location>
        <begin position="219"/>
        <end position="224"/>
    </location>
</feature>
<feature type="active site" description="Nucleophile" evidence="3 4">
    <location>
        <position position="95"/>
    </location>
</feature>
<feature type="active site" description="Proton donor" evidence="3">
    <location>
        <position position="169"/>
    </location>
</feature>
<feature type="site" description="Transition state stabilizer" evidence="3">
    <location>
        <position position="89"/>
    </location>
</feature>
<feature type="site" description="Important for enzyme activity" evidence="3">
    <location>
        <position position="184"/>
    </location>
</feature>
<feature type="modified residue" description="Phosphoserine" evidence="2">
    <location>
        <position position="130"/>
    </location>
</feature>
<dbReference type="EC" id="3.4.19.12" evidence="2"/>
<dbReference type="EMBL" id="DQ972951">
    <property type="protein sequence ID" value="ABI96187.1"/>
    <property type="molecule type" value="mRNA"/>
</dbReference>
<dbReference type="RefSeq" id="NP_001070695.1">
    <property type="nucleotide sequence ID" value="NM_001077227.1"/>
</dbReference>
<dbReference type="BMRB" id="Q06AB3"/>
<dbReference type="SMR" id="Q06AB3"/>
<dbReference type="FunCoup" id="Q06AB3">
    <property type="interactions" value="892"/>
</dbReference>
<dbReference type="STRING" id="9823.ENSSSCP00000059821"/>
<dbReference type="MEROPS" id="C12.003"/>
<dbReference type="GlyGen" id="Q06AB3">
    <property type="glycosylation" value="1 site"/>
</dbReference>
<dbReference type="PaxDb" id="9823-ENSSSCP00000010107"/>
<dbReference type="PeptideAtlas" id="Q06AB3"/>
<dbReference type="GeneID" id="768115"/>
<dbReference type="KEGG" id="ssc:768115"/>
<dbReference type="CTD" id="7347"/>
<dbReference type="eggNOG" id="KOG1415">
    <property type="taxonomic scope" value="Eukaryota"/>
</dbReference>
<dbReference type="InParanoid" id="Q06AB3"/>
<dbReference type="OrthoDB" id="427186at2759"/>
<dbReference type="Proteomes" id="UP000008227">
    <property type="component" value="Unplaced"/>
</dbReference>
<dbReference type="Proteomes" id="UP000314985">
    <property type="component" value="Unplaced"/>
</dbReference>
<dbReference type="Proteomes" id="UP000694570">
    <property type="component" value="Unplaced"/>
</dbReference>
<dbReference type="Proteomes" id="UP000694571">
    <property type="component" value="Unplaced"/>
</dbReference>
<dbReference type="Proteomes" id="UP000694720">
    <property type="component" value="Unplaced"/>
</dbReference>
<dbReference type="Proteomes" id="UP000694722">
    <property type="component" value="Unplaced"/>
</dbReference>
<dbReference type="Proteomes" id="UP000694723">
    <property type="component" value="Unplaced"/>
</dbReference>
<dbReference type="Proteomes" id="UP000694724">
    <property type="component" value="Unplaced"/>
</dbReference>
<dbReference type="Proteomes" id="UP000694725">
    <property type="component" value="Unplaced"/>
</dbReference>
<dbReference type="Proteomes" id="UP000694726">
    <property type="component" value="Unplaced"/>
</dbReference>
<dbReference type="Proteomes" id="UP000694727">
    <property type="component" value="Unplaced"/>
</dbReference>
<dbReference type="Proteomes" id="UP000694728">
    <property type="component" value="Unplaced"/>
</dbReference>
<dbReference type="GO" id="GO:0005737">
    <property type="term" value="C:cytoplasm"/>
    <property type="evidence" value="ECO:0000318"/>
    <property type="project" value="GO_Central"/>
</dbReference>
<dbReference type="GO" id="GO:0004843">
    <property type="term" value="F:cysteine-type deubiquitinase activity"/>
    <property type="evidence" value="ECO:0000318"/>
    <property type="project" value="GO_Central"/>
</dbReference>
<dbReference type="GO" id="GO:0030163">
    <property type="term" value="P:protein catabolic process"/>
    <property type="evidence" value="ECO:0000318"/>
    <property type="project" value="GO_Central"/>
</dbReference>
<dbReference type="GO" id="GO:0006511">
    <property type="term" value="P:ubiquitin-dependent protein catabolic process"/>
    <property type="evidence" value="ECO:0007669"/>
    <property type="project" value="InterPro"/>
</dbReference>
<dbReference type="CDD" id="cd09616">
    <property type="entry name" value="Peptidase_C12_UCH_L1_L3"/>
    <property type="match status" value="1"/>
</dbReference>
<dbReference type="FunFam" id="3.40.532.10:FF:000005">
    <property type="entry name" value="Ubiquitin carboxyl-terminal hydrolase"/>
    <property type="match status" value="1"/>
</dbReference>
<dbReference type="Gene3D" id="3.40.532.10">
    <property type="entry name" value="Peptidase C12, ubiquitin carboxyl-terminal hydrolase"/>
    <property type="match status" value="1"/>
</dbReference>
<dbReference type="InterPro" id="IPR038765">
    <property type="entry name" value="Papain-like_cys_pep_sf"/>
</dbReference>
<dbReference type="InterPro" id="IPR001578">
    <property type="entry name" value="Peptidase_C12_UCH"/>
</dbReference>
<dbReference type="InterPro" id="IPR036959">
    <property type="entry name" value="Peptidase_C12_UCH_sf"/>
</dbReference>
<dbReference type="InterPro" id="IPR057254">
    <property type="entry name" value="UCH_AS"/>
</dbReference>
<dbReference type="PANTHER" id="PTHR10589">
    <property type="entry name" value="UBIQUITIN CARBOXYL-TERMINAL HYDROLASE"/>
    <property type="match status" value="1"/>
</dbReference>
<dbReference type="PANTHER" id="PTHR10589:SF24">
    <property type="entry name" value="UBIQUITIN CARBOXYL-TERMINAL HYDROLASE ISOZYME L3"/>
    <property type="match status" value="1"/>
</dbReference>
<dbReference type="Pfam" id="PF01088">
    <property type="entry name" value="Peptidase_C12"/>
    <property type="match status" value="1"/>
</dbReference>
<dbReference type="PRINTS" id="PR00707">
    <property type="entry name" value="UBCTHYDRLASE"/>
</dbReference>
<dbReference type="SUPFAM" id="SSF54001">
    <property type="entry name" value="Cysteine proteinases"/>
    <property type="match status" value="1"/>
</dbReference>
<dbReference type="PROSITE" id="PS00140">
    <property type="entry name" value="UCH_1"/>
    <property type="match status" value="1"/>
</dbReference>
<dbReference type="PROSITE" id="PS52048">
    <property type="entry name" value="UCH_DOMAIN"/>
    <property type="match status" value="1"/>
</dbReference>
<protein>
    <recommendedName>
        <fullName>Ubiquitin carboxyl-terminal hydrolase isozyme L3</fullName>
        <shortName>UCH-L3</shortName>
        <ecNumber evidence="2">3.4.19.12</ecNumber>
    </recommendedName>
    <alternativeName>
        <fullName>Ubiquitin thioesterase L3</fullName>
    </alternativeName>
</protein>
<comment type="function">
    <text evidence="1">Deubiquitinating enzyme (DUB) that controls levels of cellular ubiquitin through processing of ubiquitin precursors and ubiquitinated proteins. Thiol protease that recognizes and hydrolyzes a peptide bond at the C-terminal glycine of either ubiquitin or NEDD8. Has a 10-fold preference for Arg and Lys at position P3, and exhibits a preference towards 'Lys-48'-linked ubiquitin chains. Deubiquitinates ENAC in apical compartments, thereby regulating apical membrane recycling. Indirectly increases the phosphorylation of IGFIR, AKT and FOXO1 and promotes insulin-signaling and insulin-induced adipogenesis. Required for stress-response retinal, skeletal muscle and germ cell maintenance. May be involved in working memory. Can hydrolyze UBB(+1), a mutated form of ubiquitin which is not effectively degraded by the proteasome (By similarity).</text>
</comment>
<comment type="catalytic activity">
    <reaction evidence="2">
        <text>Thiol-dependent hydrolysis of ester, thioester, amide, peptide and isopeptide bonds formed by the C-terminal Gly of ubiquitin (a 76-residue protein attached to proteins as an intracellular targeting signal).</text>
        <dbReference type="EC" id="3.4.19.12"/>
    </reaction>
</comment>
<comment type="activity regulation">
    <text evidence="1">Inhibited by monoubiquitin and diubiquitin.</text>
</comment>
<comment type="subunit">
    <text evidence="1">Preferentially binds diubiquitin; the interaction does not hydrolyze diubiquitin but, in vitro, inhibits the hydrolyzing activity on other substrates.</text>
</comment>
<comment type="subcellular location">
    <subcellularLocation>
        <location evidence="1">Cytoplasm</location>
    </subcellularLocation>
</comment>
<comment type="similarity">
    <text evidence="5">Belongs to the peptidase C12 family.</text>
</comment>
<keyword id="KW-0963">Cytoplasm</keyword>
<keyword id="KW-0378">Hydrolase</keyword>
<keyword id="KW-0597">Phosphoprotein</keyword>
<keyword id="KW-0645">Protease</keyword>
<keyword id="KW-1185">Reference proteome</keyword>
<keyword id="KW-0788">Thiol protease</keyword>
<keyword id="KW-0833">Ubl conjugation pathway</keyword>
<name>UCHL3_PIG</name>
<organism>
    <name type="scientific">Sus scrofa</name>
    <name type="common">Pig</name>
    <dbReference type="NCBI Taxonomy" id="9823"/>
    <lineage>
        <taxon>Eukaryota</taxon>
        <taxon>Metazoa</taxon>
        <taxon>Chordata</taxon>
        <taxon>Craniata</taxon>
        <taxon>Vertebrata</taxon>
        <taxon>Euteleostomi</taxon>
        <taxon>Mammalia</taxon>
        <taxon>Eutheria</taxon>
        <taxon>Laurasiatheria</taxon>
        <taxon>Artiodactyla</taxon>
        <taxon>Suina</taxon>
        <taxon>Suidae</taxon>
        <taxon>Sus</taxon>
    </lineage>
</organism>
<gene>
    <name type="primary">UCHL3</name>
</gene>
<accession>Q06AB3</accession>